<proteinExistence type="evidence at protein level"/>
<organism>
    <name type="scientific">Methanocaldococcus jannaschii (strain ATCC 43067 / DSM 2661 / JAL-1 / JCM 10045 / NBRC 100440)</name>
    <name type="common">Methanococcus jannaschii</name>
    <dbReference type="NCBI Taxonomy" id="243232"/>
    <lineage>
        <taxon>Archaea</taxon>
        <taxon>Methanobacteriati</taxon>
        <taxon>Methanobacteriota</taxon>
        <taxon>Methanomada group</taxon>
        <taxon>Methanococci</taxon>
        <taxon>Methanococcales</taxon>
        <taxon>Methanocaldococcaceae</taxon>
        <taxon>Methanocaldococcus</taxon>
    </lineage>
</organism>
<evidence type="ECO:0000303" key="1">
    <source>
    </source>
</evidence>
<evidence type="ECO:0000305" key="2"/>
<evidence type="ECO:0000305" key="3">
    <source ref="2"/>
</evidence>
<protein>
    <recommendedName>
        <fullName evidence="1">Type II methyltransferase M.MjaI</fullName>
        <shortName evidence="1">M.MjaI</shortName>
        <ecNumber>2.1.1.113</ecNumber>
    </recommendedName>
    <alternativeName>
        <fullName>N-4 cytosine-specific methyltransferase MjaI</fullName>
    </alternativeName>
</protein>
<dbReference type="EC" id="2.1.1.113"/>
<dbReference type="EMBL" id="L77117">
    <property type="protein sequence ID" value="AAB98988.1"/>
    <property type="molecule type" value="Genomic_DNA"/>
</dbReference>
<dbReference type="PIR" id="A64423">
    <property type="entry name" value="A64423"/>
</dbReference>
<dbReference type="SMR" id="Q58392"/>
<dbReference type="STRING" id="243232.MJ_0985"/>
<dbReference type="REBASE" id="3889">
    <property type="entry name" value="M.MjaI"/>
</dbReference>
<dbReference type="PaxDb" id="243232-MJ_0985"/>
<dbReference type="EnsemblBacteria" id="AAB98988">
    <property type="protein sequence ID" value="AAB98988"/>
    <property type="gene ID" value="MJ_0985"/>
</dbReference>
<dbReference type="KEGG" id="mja:MJ_0985"/>
<dbReference type="eggNOG" id="arCOG00115">
    <property type="taxonomic scope" value="Archaea"/>
</dbReference>
<dbReference type="HOGENOM" id="CLU_024927_2_2_2"/>
<dbReference type="InParanoid" id="Q58392"/>
<dbReference type="OrthoDB" id="38200at2157"/>
<dbReference type="PhylomeDB" id="Q58392"/>
<dbReference type="PRO" id="PR:Q58392"/>
<dbReference type="Proteomes" id="UP000000805">
    <property type="component" value="Chromosome"/>
</dbReference>
<dbReference type="GO" id="GO:0005737">
    <property type="term" value="C:cytoplasm"/>
    <property type="evidence" value="ECO:0000318"/>
    <property type="project" value="GO_Central"/>
</dbReference>
<dbReference type="GO" id="GO:0003677">
    <property type="term" value="F:DNA binding"/>
    <property type="evidence" value="ECO:0007669"/>
    <property type="project" value="UniProtKB-KW"/>
</dbReference>
<dbReference type="GO" id="GO:0008168">
    <property type="term" value="F:methyltransferase activity"/>
    <property type="evidence" value="ECO:0000318"/>
    <property type="project" value="GO_Central"/>
</dbReference>
<dbReference type="GO" id="GO:0008170">
    <property type="term" value="F:N-methyltransferase activity"/>
    <property type="evidence" value="ECO:0007669"/>
    <property type="project" value="InterPro"/>
</dbReference>
<dbReference type="GO" id="GO:0015667">
    <property type="term" value="F:site-specific DNA-methyltransferase (cytosine-N4-specific) activity"/>
    <property type="evidence" value="ECO:0007669"/>
    <property type="project" value="UniProtKB-EC"/>
</dbReference>
<dbReference type="GO" id="GO:0009307">
    <property type="term" value="P:DNA restriction-modification system"/>
    <property type="evidence" value="ECO:0007669"/>
    <property type="project" value="UniProtKB-KW"/>
</dbReference>
<dbReference type="GO" id="GO:0032259">
    <property type="term" value="P:methylation"/>
    <property type="evidence" value="ECO:0007669"/>
    <property type="project" value="UniProtKB-KW"/>
</dbReference>
<dbReference type="Gene3D" id="3.40.50.150">
    <property type="entry name" value="Vaccinia Virus protein VP39"/>
    <property type="match status" value="1"/>
</dbReference>
<dbReference type="InterPro" id="IPR002941">
    <property type="entry name" value="DNA_methylase_N4/N6"/>
</dbReference>
<dbReference type="InterPro" id="IPR017985">
    <property type="entry name" value="MeTrfase_CN4_CS"/>
</dbReference>
<dbReference type="InterPro" id="IPR001091">
    <property type="entry name" value="RM_Methyltransferase"/>
</dbReference>
<dbReference type="InterPro" id="IPR029063">
    <property type="entry name" value="SAM-dependent_MTases_sf"/>
</dbReference>
<dbReference type="PANTHER" id="PTHR13370">
    <property type="entry name" value="RNA METHYLASE-RELATED"/>
    <property type="match status" value="1"/>
</dbReference>
<dbReference type="PANTHER" id="PTHR13370:SF3">
    <property type="entry name" value="TRNA (GUANINE(10)-N2)-METHYLTRANSFERASE HOMOLOG"/>
    <property type="match status" value="1"/>
</dbReference>
<dbReference type="Pfam" id="PF01555">
    <property type="entry name" value="N6_N4_Mtase"/>
    <property type="match status" value="1"/>
</dbReference>
<dbReference type="PRINTS" id="PR00508">
    <property type="entry name" value="S21N4MTFRASE"/>
</dbReference>
<dbReference type="SUPFAM" id="SSF53335">
    <property type="entry name" value="S-adenosyl-L-methionine-dependent methyltransferases"/>
    <property type="match status" value="1"/>
</dbReference>
<dbReference type="PROSITE" id="PS00093">
    <property type="entry name" value="N4_MTASE"/>
    <property type="match status" value="1"/>
</dbReference>
<feature type="chain" id="PRO_0000087936" description="Type II methyltransferase M.MjaI">
    <location>
        <begin position="1"/>
        <end position="303"/>
    </location>
</feature>
<comment type="function">
    <text evidence="1 3">A beta subtype methylase that recognizes the double-stranded sequence 5'-CTAG-3', methylates C-1 on both strands, and protects the DNA from cleavage by the MjaI endonuclease.</text>
</comment>
<comment type="catalytic activity">
    <reaction>
        <text>a 2'-deoxycytidine in DNA + S-adenosyl-L-methionine = an N(4)-methyl-2'-deoxycytidine in DNA + S-adenosyl-L-homocysteine + H(+)</text>
        <dbReference type="Rhea" id="RHEA:16857"/>
        <dbReference type="Rhea" id="RHEA-COMP:11369"/>
        <dbReference type="Rhea" id="RHEA-COMP:13674"/>
        <dbReference type="ChEBI" id="CHEBI:15378"/>
        <dbReference type="ChEBI" id="CHEBI:57856"/>
        <dbReference type="ChEBI" id="CHEBI:59789"/>
        <dbReference type="ChEBI" id="CHEBI:85452"/>
        <dbReference type="ChEBI" id="CHEBI:137933"/>
        <dbReference type="EC" id="2.1.1.113"/>
    </reaction>
</comment>
<comment type="similarity">
    <text evidence="2">Belongs to the N(4)/N(6)-methyltransferase family. N(4) subfamily.</text>
</comment>
<sequence length="303" mass="35518">MMSIDITTNHKIIFGDARKMDEIEDESVHLVVTSPPYPMIEMWDELFKMLNLEINKRWMEMENEEDEEKKEKLIMQIYNLMHQTLYPVWEEVYRVLVPGGIACINIGDATRKINGVFRLFPNHSKIIENFEKIGFVTLPYILWKKPSNKPNAFLGSGFLPPNAYVTLDVEYILIFRKGKPRKFKPKDPLRYASAYTKEERDRWFSQIWEIVGDKQTHPKIERRTASFPEEIPRRLIRMFSIIGDTVLDPFLGTGTTVKAAIELKRNSIGYEIDKSLKPIIEEKIGIKQKRIGMDFNVEFINRG</sequence>
<reference key="1">
    <citation type="journal article" date="1996" name="Science">
        <title>Complete genome sequence of the methanogenic archaeon, Methanococcus jannaschii.</title>
        <authorList>
            <person name="Bult C.J."/>
            <person name="White O."/>
            <person name="Olsen G.J."/>
            <person name="Zhou L."/>
            <person name="Fleischmann R.D."/>
            <person name="Sutton G.G."/>
            <person name="Blake J.A."/>
            <person name="FitzGerald L.M."/>
            <person name="Clayton R.A."/>
            <person name="Gocayne J.D."/>
            <person name="Kerlavage A.R."/>
            <person name="Dougherty B.A."/>
            <person name="Tomb J.-F."/>
            <person name="Adams M.D."/>
            <person name="Reich C.I."/>
            <person name="Overbeek R."/>
            <person name="Kirkness E.F."/>
            <person name="Weinstock K.G."/>
            <person name="Merrick J.M."/>
            <person name="Glodek A."/>
            <person name="Scott J.L."/>
            <person name="Geoghagen N.S.M."/>
            <person name="Weidman J.F."/>
            <person name="Fuhrmann J.L."/>
            <person name="Nguyen D."/>
            <person name="Utterback T.R."/>
            <person name="Kelley J.M."/>
            <person name="Peterson J.D."/>
            <person name="Sadow P.W."/>
            <person name="Hanna M.C."/>
            <person name="Cotton M.D."/>
            <person name="Roberts K.M."/>
            <person name="Hurst M.A."/>
            <person name="Kaine B.P."/>
            <person name="Borodovsky M."/>
            <person name="Klenk H.-P."/>
            <person name="Fraser C.M."/>
            <person name="Smith H.O."/>
            <person name="Woese C.R."/>
            <person name="Venter J.C."/>
        </authorList>
    </citation>
    <scope>NUCLEOTIDE SEQUENCE [LARGE SCALE GENOMIC DNA]</scope>
    <source>
        <strain>ATCC 43067 / DSM 2661 / JAL-1 / JCM 10045 / NBRC 100440</strain>
    </source>
</reference>
<reference key="2">
    <citation type="patent" date="1999-03-11" number="WO9911821">
        <title>Method for screening restriction endonucleases.</title>
        <authorList>
            <person name="Noren C.J."/>
            <person name="Roberts R.J."/>
            <person name="Patti J."/>
            <person name="Byrd D.R."/>
            <person name="Morgan R.D."/>
        </authorList>
    </citation>
    <scope>CHARACTERIZATION</scope>
</reference>
<reference key="3">
    <citation type="journal article" date="2003" name="Nucleic Acids Res.">
        <title>A nomenclature for restriction enzymes, DNA methyltransferases, homing endonucleases and their genes.</title>
        <authorList>
            <person name="Roberts R.J."/>
            <person name="Belfort M."/>
            <person name="Bestor T."/>
            <person name="Bhagwat A.S."/>
            <person name="Bickle T.A."/>
            <person name="Bitinaite J."/>
            <person name="Blumenthal R.M."/>
            <person name="Degtyarev S.K."/>
            <person name="Dryden D.T."/>
            <person name="Dybvig K."/>
            <person name="Firman K."/>
            <person name="Gromova E.S."/>
            <person name="Gumport R.I."/>
            <person name="Halford S.E."/>
            <person name="Hattman S."/>
            <person name="Heitman J."/>
            <person name="Hornby D.P."/>
            <person name="Janulaitis A."/>
            <person name="Jeltsch A."/>
            <person name="Josephsen J."/>
            <person name="Kiss A."/>
            <person name="Klaenhammer T.R."/>
            <person name="Kobayashi I."/>
            <person name="Kong H."/>
            <person name="Krueger D.H."/>
            <person name="Lacks S."/>
            <person name="Marinus M.G."/>
            <person name="Miyahara M."/>
            <person name="Morgan R.D."/>
            <person name="Murray N.E."/>
            <person name="Nagaraja V."/>
            <person name="Piekarowicz A."/>
            <person name="Pingoud A."/>
            <person name="Raleigh E."/>
            <person name="Rao D.N."/>
            <person name="Reich N."/>
            <person name="Repin V.E."/>
            <person name="Selker E.U."/>
            <person name="Shaw P.C."/>
            <person name="Stein D.C."/>
            <person name="Stoddard B.L."/>
            <person name="Szybalski W."/>
            <person name="Trautner T.A."/>
            <person name="Van Etten J.L."/>
            <person name="Vitor J.M."/>
            <person name="Wilson G.G."/>
            <person name="Xu S.Y."/>
        </authorList>
    </citation>
    <scope>NOMENCLATURE</scope>
    <scope>SUBTYPE</scope>
</reference>
<accession>Q58392</accession>
<name>MTM1_METJA</name>
<keyword id="KW-0238">DNA-binding</keyword>
<keyword id="KW-0489">Methyltransferase</keyword>
<keyword id="KW-1185">Reference proteome</keyword>
<keyword id="KW-0680">Restriction system</keyword>
<keyword id="KW-0949">S-adenosyl-L-methionine</keyword>
<keyword id="KW-0808">Transferase</keyword>
<gene>
    <name type="primary">mjaIM</name>
    <name type="ordered locus">MJ0985</name>
</gene>